<reference key="1">
    <citation type="journal article" date="1995" name="Microbiology">
        <title>Determination of a 17,484 bp nucleotide sequence around the 39 degrees region of the Bacillus subtilis chromosome and similarity analysis of the products of putative ORFs.</title>
        <authorList>
            <person name="Akagawa E."/>
            <person name="Kurita K."/>
            <person name="Sugawara T."/>
            <person name="Nakamura K."/>
            <person name="Kasahara Y."/>
            <person name="Ogasawara N."/>
            <person name="Yamane K."/>
        </authorList>
    </citation>
    <scope>NUCLEOTIDE SEQUENCE [GENOMIC DNA]</scope>
    <source>
        <strain>168</strain>
    </source>
</reference>
<reference key="2">
    <citation type="journal article" date="1996" name="Microbiology">
        <title>The 25 degrees-36 degrees region of the Bacillus subtilis chromosome: determination of the sequence of a 146 kb segment and identification of 113 genes.</title>
        <authorList>
            <person name="Yamane K."/>
            <person name="Kumano M."/>
            <person name="Kurita K."/>
        </authorList>
    </citation>
    <scope>NUCLEOTIDE SEQUENCE [GENOMIC DNA]</scope>
    <source>
        <strain>168</strain>
    </source>
</reference>
<reference key="3">
    <citation type="journal article" date="1997" name="Nature">
        <title>The complete genome sequence of the Gram-positive bacterium Bacillus subtilis.</title>
        <authorList>
            <person name="Kunst F."/>
            <person name="Ogasawara N."/>
            <person name="Moszer I."/>
            <person name="Albertini A.M."/>
            <person name="Alloni G."/>
            <person name="Azevedo V."/>
            <person name="Bertero M.G."/>
            <person name="Bessieres P."/>
            <person name="Bolotin A."/>
            <person name="Borchert S."/>
            <person name="Borriss R."/>
            <person name="Boursier L."/>
            <person name="Brans A."/>
            <person name="Braun M."/>
            <person name="Brignell S.C."/>
            <person name="Bron S."/>
            <person name="Brouillet S."/>
            <person name="Bruschi C.V."/>
            <person name="Caldwell B."/>
            <person name="Capuano V."/>
            <person name="Carter N.M."/>
            <person name="Choi S.-K."/>
            <person name="Codani J.-J."/>
            <person name="Connerton I.F."/>
            <person name="Cummings N.J."/>
            <person name="Daniel R.A."/>
            <person name="Denizot F."/>
            <person name="Devine K.M."/>
            <person name="Duesterhoeft A."/>
            <person name="Ehrlich S.D."/>
            <person name="Emmerson P.T."/>
            <person name="Entian K.-D."/>
            <person name="Errington J."/>
            <person name="Fabret C."/>
            <person name="Ferrari E."/>
            <person name="Foulger D."/>
            <person name="Fritz C."/>
            <person name="Fujita M."/>
            <person name="Fujita Y."/>
            <person name="Fuma S."/>
            <person name="Galizzi A."/>
            <person name="Galleron N."/>
            <person name="Ghim S.-Y."/>
            <person name="Glaser P."/>
            <person name="Goffeau A."/>
            <person name="Golightly E.J."/>
            <person name="Grandi G."/>
            <person name="Guiseppi G."/>
            <person name="Guy B.J."/>
            <person name="Haga K."/>
            <person name="Haiech J."/>
            <person name="Harwood C.R."/>
            <person name="Henaut A."/>
            <person name="Hilbert H."/>
            <person name="Holsappel S."/>
            <person name="Hosono S."/>
            <person name="Hullo M.-F."/>
            <person name="Itaya M."/>
            <person name="Jones L.-M."/>
            <person name="Joris B."/>
            <person name="Karamata D."/>
            <person name="Kasahara Y."/>
            <person name="Klaerr-Blanchard M."/>
            <person name="Klein C."/>
            <person name="Kobayashi Y."/>
            <person name="Koetter P."/>
            <person name="Koningstein G."/>
            <person name="Krogh S."/>
            <person name="Kumano M."/>
            <person name="Kurita K."/>
            <person name="Lapidus A."/>
            <person name="Lardinois S."/>
            <person name="Lauber J."/>
            <person name="Lazarevic V."/>
            <person name="Lee S.-M."/>
            <person name="Levine A."/>
            <person name="Liu H."/>
            <person name="Masuda S."/>
            <person name="Mauel C."/>
            <person name="Medigue C."/>
            <person name="Medina N."/>
            <person name="Mellado R.P."/>
            <person name="Mizuno M."/>
            <person name="Moestl D."/>
            <person name="Nakai S."/>
            <person name="Noback M."/>
            <person name="Noone D."/>
            <person name="O'Reilly M."/>
            <person name="Ogawa K."/>
            <person name="Ogiwara A."/>
            <person name="Oudega B."/>
            <person name="Park S.-H."/>
            <person name="Parro V."/>
            <person name="Pohl T.M."/>
            <person name="Portetelle D."/>
            <person name="Porwollik S."/>
            <person name="Prescott A.M."/>
            <person name="Presecan E."/>
            <person name="Pujic P."/>
            <person name="Purnelle B."/>
            <person name="Rapoport G."/>
            <person name="Rey M."/>
            <person name="Reynolds S."/>
            <person name="Rieger M."/>
            <person name="Rivolta C."/>
            <person name="Rocha E."/>
            <person name="Roche B."/>
            <person name="Rose M."/>
            <person name="Sadaie Y."/>
            <person name="Sato T."/>
            <person name="Scanlan E."/>
            <person name="Schleich S."/>
            <person name="Schroeter R."/>
            <person name="Scoffone F."/>
            <person name="Sekiguchi J."/>
            <person name="Sekowska A."/>
            <person name="Seror S.J."/>
            <person name="Serror P."/>
            <person name="Shin B.-S."/>
            <person name="Soldo B."/>
            <person name="Sorokin A."/>
            <person name="Tacconi E."/>
            <person name="Takagi T."/>
            <person name="Takahashi H."/>
            <person name="Takemaru K."/>
            <person name="Takeuchi M."/>
            <person name="Tamakoshi A."/>
            <person name="Tanaka T."/>
            <person name="Terpstra P."/>
            <person name="Tognoni A."/>
            <person name="Tosato V."/>
            <person name="Uchiyama S."/>
            <person name="Vandenbol M."/>
            <person name="Vannier F."/>
            <person name="Vassarotti A."/>
            <person name="Viari A."/>
            <person name="Wambutt R."/>
            <person name="Wedler E."/>
            <person name="Wedler H."/>
            <person name="Weitzenegger T."/>
            <person name="Winters P."/>
            <person name="Wipat A."/>
            <person name="Yamamoto H."/>
            <person name="Yamane K."/>
            <person name="Yasumoto K."/>
            <person name="Yata K."/>
            <person name="Yoshida K."/>
            <person name="Yoshikawa H.-F."/>
            <person name="Zumstein E."/>
            <person name="Yoshikawa H."/>
            <person name="Danchin A."/>
        </authorList>
    </citation>
    <scope>NUCLEOTIDE SEQUENCE [LARGE SCALE GENOMIC DNA]</scope>
    <source>
        <strain>168</strain>
    </source>
</reference>
<reference key="4">
    <citation type="journal article" date="2009" name="Microbiology">
        <title>From a consortium sequence to a unified sequence: the Bacillus subtilis 168 reference genome a decade later.</title>
        <authorList>
            <person name="Barbe V."/>
            <person name="Cruveiller S."/>
            <person name="Kunst F."/>
            <person name="Lenoble P."/>
            <person name="Meurice G."/>
            <person name="Sekowska A."/>
            <person name="Vallenet D."/>
            <person name="Wang T."/>
            <person name="Moszer I."/>
            <person name="Medigue C."/>
            <person name="Danchin A."/>
        </authorList>
    </citation>
    <scope>SEQUENCE REVISION TO 155-158 AND 181-186</scope>
</reference>
<reference key="5">
    <citation type="journal article" date="2015" name="ChemBioChem">
        <title>Catalysis of an essential step in Vitamin B2 biosynthesis by a consortium of broad spectrum hydrolases.</title>
        <authorList>
            <person name="Sarge S."/>
            <person name="Haase I."/>
            <person name="Illarionov B."/>
            <person name="Laudert D."/>
            <person name="Hohmann H.P."/>
            <person name="Bacher A."/>
            <person name="Fischer M."/>
        </authorList>
    </citation>
    <scope>FUNCTION</scope>
    <scope>CATALYTIC ACTIVITY</scope>
    <scope>BIOPHYSICOCHEMICAL PROPERTIES</scope>
    <scope>COFACTOR</scope>
    <scope>PATHWAY</scope>
    <scope>IDENTIFICATION BY MASS SPECTROMETRY</scope>
</reference>
<reference key="6">
    <citation type="journal article" date="2015" name="Proc. Natl. Acad. Sci. U.S.A.">
        <title>Panoramic view of a superfamily of phosphatases through substrate profiling.</title>
        <authorList>
            <person name="Huang H."/>
            <person name="Pandya C."/>
            <person name="Liu C."/>
            <person name="Al-Obaidi N.F."/>
            <person name="Wang M."/>
            <person name="Zheng L."/>
            <person name="Toews Keating S."/>
            <person name="Aono M."/>
            <person name="Love J.D."/>
            <person name="Evans B."/>
            <person name="Seidel R.D."/>
            <person name="Hillerich B.S."/>
            <person name="Garforth S.J."/>
            <person name="Almo S.C."/>
            <person name="Mariano P.S."/>
            <person name="Dunaway-Mariano D."/>
            <person name="Allen K.N."/>
            <person name="Farelli J.D."/>
        </authorList>
    </citation>
    <scope>FUNCTION</scope>
    <scope>COFACTOR</scope>
</reference>
<reference key="7">
    <citation type="journal article" date="2016" name="BMC Microbiol.">
        <title>Bacillus subtilis 5'-nucleotidases with various functions and substrate specificities.</title>
        <authorList>
            <person name="Terakawa A."/>
            <person name="Natsume A."/>
            <person name="Okada A."/>
            <person name="Nishihata S."/>
            <person name="Kuse J."/>
            <person name="Tanaka K."/>
            <person name="Takenaka S."/>
            <person name="Ishikawa S."/>
            <person name="Yoshida K.I."/>
        </authorList>
    </citation>
    <scope>FUNCTION</scope>
    <scope>DISRUPTION PHENOTYPE</scope>
    <source>
        <strain>168</strain>
    </source>
</reference>
<accession>P42962</accession>
<dbReference type="EC" id="3.1.3.104" evidence="3"/>
<dbReference type="EMBL" id="D38161">
    <property type="protein sequence ID" value="BAA07356.1"/>
    <property type="molecule type" value="Genomic_DNA"/>
</dbReference>
<dbReference type="EMBL" id="D50453">
    <property type="protein sequence ID" value="BAA09035.1"/>
    <property type="molecule type" value="Genomic_DNA"/>
</dbReference>
<dbReference type="EMBL" id="AL009126">
    <property type="protein sequence ID" value="CAB12212.2"/>
    <property type="molecule type" value="Genomic_DNA"/>
</dbReference>
<dbReference type="PIR" id="I39893">
    <property type="entry name" value="I39893"/>
</dbReference>
<dbReference type="RefSeq" id="WP_003234424.1">
    <property type="nucleotide sequence ID" value="NZ_OZ025638.1"/>
</dbReference>
<dbReference type="SMR" id="P42962"/>
<dbReference type="FunCoup" id="P42962">
    <property type="interactions" value="198"/>
</dbReference>
<dbReference type="STRING" id="224308.BSU04040"/>
<dbReference type="jPOST" id="P42962"/>
<dbReference type="PaxDb" id="224308-BSU04040"/>
<dbReference type="EnsemblBacteria" id="CAB12212">
    <property type="protein sequence ID" value="CAB12212"/>
    <property type="gene ID" value="BSU_04040"/>
</dbReference>
<dbReference type="GeneID" id="938252"/>
<dbReference type="KEGG" id="bsu:BSU04040"/>
<dbReference type="PATRIC" id="fig|224308.179.peg.430"/>
<dbReference type="eggNOG" id="COG0561">
    <property type="taxonomic scope" value="Bacteria"/>
</dbReference>
<dbReference type="InParanoid" id="P42962"/>
<dbReference type="OrthoDB" id="9781413at2"/>
<dbReference type="PhylomeDB" id="P42962"/>
<dbReference type="BioCyc" id="BSUB:BSU04040-MONOMER"/>
<dbReference type="BioCyc" id="MetaCyc:BSU04040-MONOMER"/>
<dbReference type="BRENDA" id="3.1.3.104">
    <property type="organism ID" value="658"/>
</dbReference>
<dbReference type="SABIO-RK" id="P42962"/>
<dbReference type="UniPathway" id="UPA00275">
    <property type="reaction ID" value="UER00403"/>
</dbReference>
<dbReference type="Proteomes" id="UP000001570">
    <property type="component" value="Chromosome"/>
</dbReference>
<dbReference type="GO" id="GO:0005829">
    <property type="term" value="C:cytosol"/>
    <property type="evidence" value="ECO:0000318"/>
    <property type="project" value="GO_Central"/>
</dbReference>
<dbReference type="GO" id="GO:0043726">
    <property type="term" value="F:5-amino-6-(5-phosphoribitylamino)uracil phosphatase activity"/>
    <property type="evidence" value="ECO:0007669"/>
    <property type="project" value="UniProtKB-EC"/>
</dbReference>
<dbReference type="GO" id="GO:0000287">
    <property type="term" value="F:magnesium ion binding"/>
    <property type="evidence" value="ECO:0000318"/>
    <property type="project" value="GO_Central"/>
</dbReference>
<dbReference type="GO" id="GO:0016791">
    <property type="term" value="F:phosphatase activity"/>
    <property type="evidence" value="ECO:0000318"/>
    <property type="project" value="GO_Central"/>
</dbReference>
<dbReference type="GO" id="GO:0009231">
    <property type="term" value="P:riboflavin biosynthetic process"/>
    <property type="evidence" value="ECO:0007669"/>
    <property type="project" value="UniProtKB-UniPathway"/>
</dbReference>
<dbReference type="CDD" id="cd07516">
    <property type="entry name" value="HAD_Pase"/>
    <property type="match status" value="1"/>
</dbReference>
<dbReference type="Gene3D" id="3.90.1070.10">
    <property type="match status" value="1"/>
</dbReference>
<dbReference type="Gene3D" id="3.40.50.1000">
    <property type="entry name" value="HAD superfamily/HAD-like"/>
    <property type="match status" value="1"/>
</dbReference>
<dbReference type="InterPro" id="IPR036412">
    <property type="entry name" value="HAD-like_sf"/>
</dbReference>
<dbReference type="InterPro" id="IPR006379">
    <property type="entry name" value="HAD-SF_hydro_IIB"/>
</dbReference>
<dbReference type="InterPro" id="IPR023214">
    <property type="entry name" value="HAD_sf"/>
</dbReference>
<dbReference type="NCBIfam" id="TIGR01484">
    <property type="entry name" value="HAD-SF-IIB"/>
    <property type="match status" value="1"/>
</dbReference>
<dbReference type="NCBIfam" id="TIGR01487">
    <property type="entry name" value="Pglycolate_arch"/>
    <property type="match status" value="1"/>
</dbReference>
<dbReference type="NCBIfam" id="TIGR01482">
    <property type="entry name" value="SPP-subfamily"/>
    <property type="match status" value="1"/>
</dbReference>
<dbReference type="PANTHER" id="PTHR10000:SF55">
    <property type="entry name" value="5-AMINO-6-(5-PHOSPHO-D-RIBITYLAMINO)URACIL PHOSPHATASE YCSE"/>
    <property type="match status" value="1"/>
</dbReference>
<dbReference type="PANTHER" id="PTHR10000">
    <property type="entry name" value="PHOSPHOSERINE PHOSPHATASE"/>
    <property type="match status" value="1"/>
</dbReference>
<dbReference type="Pfam" id="PF08282">
    <property type="entry name" value="Hydrolase_3"/>
    <property type="match status" value="2"/>
</dbReference>
<dbReference type="PRINTS" id="PR00119">
    <property type="entry name" value="CATATPASE"/>
</dbReference>
<dbReference type="SFLD" id="SFLDG01144">
    <property type="entry name" value="C2.B.4:_PGP_Like"/>
    <property type="match status" value="1"/>
</dbReference>
<dbReference type="SFLD" id="SFLDG01140">
    <property type="entry name" value="C2.B:_Phosphomannomutase_and_P"/>
    <property type="match status" value="1"/>
</dbReference>
<dbReference type="SUPFAM" id="SSF56784">
    <property type="entry name" value="HAD-like"/>
    <property type="match status" value="1"/>
</dbReference>
<dbReference type="PROSITE" id="PS01228">
    <property type="entry name" value="COF_1"/>
    <property type="match status" value="1"/>
</dbReference>
<dbReference type="PROSITE" id="PS01229">
    <property type="entry name" value="COF_2"/>
    <property type="match status" value="1"/>
</dbReference>
<protein>
    <recommendedName>
        <fullName evidence="6">5-amino-6-(5-phospho-D-ribitylamino)uracil phosphatase YcsE</fullName>
        <ecNumber evidence="3">3.1.3.104</ecNumber>
    </recommendedName>
</protein>
<evidence type="ECO:0000250" key="1"/>
<evidence type="ECO:0000269" key="2">
    <source>
    </source>
</evidence>
<evidence type="ECO:0000269" key="3">
    <source>
    </source>
</evidence>
<evidence type="ECO:0000269" key="4">
    <source>
    </source>
</evidence>
<evidence type="ECO:0000305" key="5"/>
<evidence type="ECO:0000305" key="6">
    <source>
    </source>
</evidence>
<gene>
    <name type="primary">ycsE</name>
    <name type="ordered locus">BSU04040</name>
</gene>
<feature type="chain" id="PRO_0000054429" description="5-amino-6-(5-phospho-D-ribitylamino)uracil phosphatase YcsE">
    <location>
        <begin position="1"/>
        <end position="249"/>
    </location>
</feature>
<feature type="active site" description="Nucleophile" evidence="1">
    <location>
        <position position="16"/>
    </location>
</feature>
<feature type="binding site" evidence="1">
    <location>
        <position position="16"/>
    </location>
    <ligand>
        <name>Mg(2+)</name>
        <dbReference type="ChEBI" id="CHEBI:18420"/>
    </ligand>
</feature>
<feature type="binding site" evidence="1">
    <location>
        <position position="17"/>
    </location>
    <ligand>
        <name>phosphate</name>
        <dbReference type="ChEBI" id="CHEBI:43474"/>
    </ligand>
</feature>
<feature type="binding site" evidence="1">
    <location>
        <position position="18"/>
    </location>
    <ligand>
        <name>Mg(2+)</name>
        <dbReference type="ChEBI" id="CHEBI:18420"/>
    </ligand>
</feature>
<feature type="binding site" evidence="1">
    <location>
        <begin position="50"/>
        <end position="51"/>
    </location>
    <ligand>
        <name>phosphate</name>
        <dbReference type="ChEBI" id="CHEBI:43474"/>
    </ligand>
</feature>
<feature type="binding site" evidence="1">
    <location>
        <position position="177"/>
    </location>
    <ligand>
        <name>phosphate</name>
        <dbReference type="ChEBI" id="CHEBI:43474"/>
    </ligand>
</feature>
<feature type="binding site" evidence="1">
    <location>
        <position position="200"/>
    </location>
    <ligand>
        <name>Mg(2+)</name>
        <dbReference type="ChEBI" id="CHEBI:18420"/>
    </ligand>
</feature>
<feature type="binding site" evidence="1">
    <location>
        <position position="201"/>
    </location>
    <ligand>
        <name>Mg(2+)</name>
        <dbReference type="ChEBI" id="CHEBI:18420"/>
    </ligand>
</feature>
<feature type="binding site" evidence="1">
    <location>
        <position position="203"/>
    </location>
    <ligand>
        <name>phosphate</name>
        <dbReference type="ChEBI" id="CHEBI:43474"/>
    </ligand>
</feature>
<feature type="sequence conflict" description="In Ref. 1; BAA07356 and 2; BAA09035." evidence="5" ref="1 2">
    <original>NKEL</original>
    <variation>TKSS</variation>
    <location>
        <begin position="155"/>
        <end position="158"/>
    </location>
</feature>
<feature type="sequence conflict" description="In Ref. 1; BAA07356 and 2; BAA09035." evidence="5" ref="1 2">
    <original>LAKVTE</original>
    <variation>PCQGYG</variation>
    <location>
        <begin position="181"/>
        <end position="186"/>
    </location>
</feature>
<comment type="function">
    <text evidence="2 3 4">Catalyzes the dephosphorylation of the riboflavin precursor 5-amino-6-(5-phospho-D-ribitylamino)uracil and of flavin mononucleotide (FMN) in vitro (PubMed:26316208). To a lesser extent, may also catalyze the dephosphorylation of a broad range of substrates such as phosphorylated sugars and triphosphate nucleotides in vitro (PubMed:25848029, PubMed:26316208).</text>
</comment>
<comment type="catalytic activity">
    <reaction evidence="3">
        <text>5-amino-6-(5-phospho-D-ribitylamino)uracil + H2O = 5-amino-6-(D-ribitylamino)uracil + phosphate</text>
        <dbReference type="Rhea" id="RHEA:25197"/>
        <dbReference type="ChEBI" id="CHEBI:15377"/>
        <dbReference type="ChEBI" id="CHEBI:15934"/>
        <dbReference type="ChEBI" id="CHEBI:43474"/>
        <dbReference type="ChEBI" id="CHEBI:58421"/>
        <dbReference type="EC" id="3.1.3.104"/>
    </reaction>
</comment>
<comment type="cofactor">
    <cofactor evidence="2 3">
        <name>Mg(2+)</name>
        <dbReference type="ChEBI" id="CHEBI:18420"/>
    </cofactor>
</comment>
<comment type="biophysicochemical properties">
    <kinetics>
        <KM evidence="3">54 uM for 5-amino-6-(5-phospho-D-ribitylamino)uracil</KM>
        <Vmax evidence="3">12.0 umol/min/mg enzyme with 5-amino-6-(5-phospho-D-ribitylamino)uracil as substrate</Vmax>
        <Vmax evidence="3">25.0 umol/min/mg enzyme with flavin mononucleotide as substrate</Vmax>
    </kinetics>
</comment>
<comment type="pathway">
    <text evidence="3">Cofactor biosynthesis; riboflavin biosynthesis; 5-amino-6-(D-ribitylamino)uracil from GTP: step 4/4.</text>
</comment>
<comment type="disruption phenotype">
    <text evidence="4">No visible phenotype during normal growth or under oxidative stress caused by diamide.</text>
</comment>
<comment type="similarity">
    <text evidence="5">Belongs to the HAD-like hydrolase superfamily. Cof family.</text>
</comment>
<sequence length="249" mass="28186">MSVQREDVDIKLIAIDMDGTLLNDEQLISDENRKAIREAEDKGVYVVISTGRTLMTCRELAESLKLSSFLITANGSEIWDSNFNLVERKLLHTDHIQMMWDLRNKHNTNFWASTVNKVWRGEFPENITDHEWLKFGFDIEDDDIRNEVLEELRKNKELEITNSSPTNIEVNALGINKAAALAKVTEKLGFTMENVMAMGDSLNDIAMIKEAGLGVAMGNAQDIVKETADYITDTNIEDGVAKAIRHWVL</sequence>
<proteinExistence type="evidence at protein level"/>
<keyword id="KW-0378">Hydrolase</keyword>
<keyword id="KW-0460">Magnesium</keyword>
<keyword id="KW-0479">Metal-binding</keyword>
<keyword id="KW-1185">Reference proteome</keyword>
<keyword id="KW-0686">Riboflavin biosynthesis</keyword>
<name>YCSE_BACSU</name>
<organism>
    <name type="scientific">Bacillus subtilis (strain 168)</name>
    <dbReference type="NCBI Taxonomy" id="224308"/>
    <lineage>
        <taxon>Bacteria</taxon>
        <taxon>Bacillati</taxon>
        <taxon>Bacillota</taxon>
        <taxon>Bacilli</taxon>
        <taxon>Bacillales</taxon>
        <taxon>Bacillaceae</taxon>
        <taxon>Bacillus</taxon>
    </lineage>
</organism>